<evidence type="ECO:0000255" key="1">
    <source>
        <dbReference type="HAMAP-Rule" id="MF_00014"/>
    </source>
</evidence>
<keyword id="KW-0143">Chaperone</keyword>
<keyword id="KW-0963">Cytoplasm</keyword>
<keyword id="KW-0690">Ribosome biogenesis</keyword>
<keyword id="KW-0698">rRNA processing</keyword>
<dbReference type="EMBL" id="CP000736">
    <property type="protein sequence ID" value="ABR52176.1"/>
    <property type="molecule type" value="Genomic_DNA"/>
</dbReference>
<dbReference type="SMR" id="A6U158"/>
<dbReference type="KEGG" id="sah:SaurJH1_1323"/>
<dbReference type="HOGENOM" id="CLU_077636_3_1_9"/>
<dbReference type="GO" id="GO:0005737">
    <property type="term" value="C:cytoplasm"/>
    <property type="evidence" value="ECO:0007669"/>
    <property type="project" value="UniProtKB-SubCell"/>
</dbReference>
<dbReference type="GO" id="GO:0005840">
    <property type="term" value="C:ribosome"/>
    <property type="evidence" value="ECO:0007669"/>
    <property type="project" value="InterPro"/>
</dbReference>
<dbReference type="GO" id="GO:0043022">
    <property type="term" value="F:ribosome binding"/>
    <property type="evidence" value="ECO:0007669"/>
    <property type="project" value="InterPro"/>
</dbReference>
<dbReference type="GO" id="GO:0042274">
    <property type="term" value="P:ribosomal small subunit biogenesis"/>
    <property type="evidence" value="ECO:0007669"/>
    <property type="project" value="UniProtKB-UniRule"/>
</dbReference>
<dbReference type="GO" id="GO:0006364">
    <property type="term" value="P:rRNA processing"/>
    <property type="evidence" value="ECO:0007669"/>
    <property type="project" value="UniProtKB-UniRule"/>
</dbReference>
<dbReference type="Gene3D" id="2.30.30.240">
    <property type="entry name" value="PRC-barrel domain"/>
    <property type="match status" value="1"/>
</dbReference>
<dbReference type="Gene3D" id="2.40.30.60">
    <property type="entry name" value="RimM"/>
    <property type="match status" value="1"/>
</dbReference>
<dbReference type="HAMAP" id="MF_00014">
    <property type="entry name" value="Ribosome_mat_RimM"/>
    <property type="match status" value="1"/>
</dbReference>
<dbReference type="InterPro" id="IPR011033">
    <property type="entry name" value="PRC_barrel-like_sf"/>
</dbReference>
<dbReference type="InterPro" id="IPR056792">
    <property type="entry name" value="PRC_RimM"/>
</dbReference>
<dbReference type="InterPro" id="IPR011961">
    <property type="entry name" value="RimM"/>
</dbReference>
<dbReference type="InterPro" id="IPR002676">
    <property type="entry name" value="RimM_N"/>
</dbReference>
<dbReference type="InterPro" id="IPR036976">
    <property type="entry name" value="RimM_N_sf"/>
</dbReference>
<dbReference type="InterPro" id="IPR009000">
    <property type="entry name" value="Transl_B-barrel_sf"/>
</dbReference>
<dbReference type="NCBIfam" id="TIGR02273">
    <property type="entry name" value="16S_RimM"/>
    <property type="match status" value="1"/>
</dbReference>
<dbReference type="PANTHER" id="PTHR33692">
    <property type="entry name" value="RIBOSOME MATURATION FACTOR RIMM"/>
    <property type="match status" value="1"/>
</dbReference>
<dbReference type="PANTHER" id="PTHR33692:SF1">
    <property type="entry name" value="RIBOSOME MATURATION FACTOR RIMM"/>
    <property type="match status" value="1"/>
</dbReference>
<dbReference type="Pfam" id="PF24986">
    <property type="entry name" value="PRC_RimM"/>
    <property type="match status" value="1"/>
</dbReference>
<dbReference type="Pfam" id="PF01782">
    <property type="entry name" value="RimM"/>
    <property type="match status" value="1"/>
</dbReference>
<dbReference type="SUPFAM" id="SSF50346">
    <property type="entry name" value="PRC-barrel domain"/>
    <property type="match status" value="1"/>
</dbReference>
<dbReference type="SUPFAM" id="SSF50447">
    <property type="entry name" value="Translation proteins"/>
    <property type="match status" value="1"/>
</dbReference>
<accession>A6U158</accession>
<sequence>MRVEVGQIVNTHGIKGEIKVKSNSDFTDVRFQPGQVLTVVHNNNDLEYTVKSHRVHKGLHMLTFEGINNINDIEHLKGSSIYQERDHEDIVLEENEFYYSDIIGCTVFDDQETPIGRVINIFETGANDVWVIKGSKEYLIPYIADVVKEVDVENKKIIITPMEGLLD</sequence>
<feature type="chain" id="PRO_1000074044" description="Ribosome maturation factor RimM">
    <location>
        <begin position="1"/>
        <end position="167"/>
    </location>
</feature>
<feature type="domain" description="PRC barrel" evidence="1">
    <location>
        <begin position="94"/>
        <end position="165"/>
    </location>
</feature>
<name>RIMM_STAA2</name>
<proteinExistence type="inferred from homology"/>
<reference key="1">
    <citation type="submission" date="2007-06" db="EMBL/GenBank/DDBJ databases">
        <title>Complete sequence of chromosome of Staphylococcus aureus subsp. aureus JH1.</title>
        <authorList>
            <consortium name="US DOE Joint Genome Institute"/>
            <person name="Copeland A."/>
            <person name="Lucas S."/>
            <person name="Lapidus A."/>
            <person name="Barry K."/>
            <person name="Detter J.C."/>
            <person name="Glavina del Rio T."/>
            <person name="Hammon N."/>
            <person name="Israni S."/>
            <person name="Dalin E."/>
            <person name="Tice H."/>
            <person name="Pitluck S."/>
            <person name="Chain P."/>
            <person name="Malfatti S."/>
            <person name="Shin M."/>
            <person name="Vergez L."/>
            <person name="Schmutz J."/>
            <person name="Larimer F."/>
            <person name="Land M."/>
            <person name="Hauser L."/>
            <person name="Kyrpides N."/>
            <person name="Ivanova N."/>
            <person name="Tomasz A."/>
            <person name="Richardson P."/>
        </authorList>
    </citation>
    <scope>NUCLEOTIDE SEQUENCE [LARGE SCALE GENOMIC DNA]</scope>
    <source>
        <strain>JH1</strain>
    </source>
</reference>
<protein>
    <recommendedName>
        <fullName evidence="1">Ribosome maturation factor RimM</fullName>
    </recommendedName>
</protein>
<gene>
    <name evidence="1" type="primary">rimM</name>
    <name type="ordered locus">SaurJH1_1323</name>
</gene>
<comment type="function">
    <text evidence="1">An accessory protein needed during the final step in the assembly of 30S ribosomal subunit, possibly for assembly of the head region. Essential for efficient processing of 16S rRNA. May be needed both before and after RbfA during the maturation of 16S rRNA. It has affinity for free ribosomal 30S subunits but not for 70S ribosomes.</text>
</comment>
<comment type="subunit">
    <text evidence="1">Binds ribosomal protein uS19.</text>
</comment>
<comment type="subcellular location">
    <subcellularLocation>
        <location evidence="1">Cytoplasm</location>
    </subcellularLocation>
</comment>
<comment type="domain">
    <text evidence="1">The PRC barrel domain binds ribosomal protein uS19.</text>
</comment>
<comment type="similarity">
    <text evidence="1">Belongs to the RimM family.</text>
</comment>
<organism>
    <name type="scientific">Staphylococcus aureus (strain JH1)</name>
    <dbReference type="NCBI Taxonomy" id="359787"/>
    <lineage>
        <taxon>Bacteria</taxon>
        <taxon>Bacillati</taxon>
        <taxon>Bacillota</taxon>
        <taxon>Bacilli</taxon>
        <taxon>Bacillales</taxon>
        <taxon>Staphylococcaceae</taxon>
        <taxon>Staphylococcus</taxon>
    </lineage>
</organism>